<accession>A0A0K0K1G8</accession>
<accession>A0A075B6Q8</accession>
<accession>A0A0A6YYR8</accession>
<accession>A0A583</accession>
<keyword id="KW-1064">Adaptive immunity</keyword>
<keyword id="KW-1003">Cell membrane</keyword>
<keyword id="KW-1015">Disulfide bond</keyword>
<keyword id="KW-0391">Immunity</keyword>
<keyword id="KW-0393">Immunoglobulin domain</keyword>
<keyword id="KW-0472">Membrane</keyword>
<keyword id="KW-0675">Receptor</keyword>
<keyword id="KW-1185">Reference proteome</keyword>
<keyword id="KW-0732">Signal</keyword>
<keyword id="KW-1279">T cell receptor</keyword>
<organism>
    <name type="scientific">Homo sapiens</name>
    <name type="common">Human</name>
    <dbReference type="NCBI Taxonomy" id="9606"/>
    <lineage>
        <taxon>Eukaryota</taxon>
        <taxon>Metazoa</taxon>
        <taxon>Chordata</taxon>
        <taxon>Craniata</taxon>
        <taxon>Vertebrata</taxon>
        <taxon>Euteleostomi</taxon>
        <taxon>Mammalia</taxon>
        <taxon>Eutheria</taxon>
        <taxon>Euarchontoglires</taxon>
        <taxon>Primates</taxon>
        <taxon>Haplorrhini</taxon>
        <taxon>Catarrhini</taxon>
        <taxon>Hominidae</taxon>
        <taxon>Homo</taxon>
    </lineage>
</organism>
<protein>
    <recommendedName>
        <fullName evidence="8">T cell receptor beta variable 10-2</fullName>
    </recommendedName>
</protein>
<sequence length="114" mass="13045">MGTRLFFYVALCLLWAGHRDAGITQSPRYKITETGRQVTLMCHQTWSHSYMFWYRQDLGHGLRLIYYSAAADITDKGEVPDGYVVSRSKTENFPLTLESATRSQTSVYFCASSE</sequence>
<reference key="1">
    <citation type="journal article" date="2003" name="Nature">
        <title>The DNA sequence of human chromosome 7.</title>
        <authorList>
            <person name="Hillier L.W."/>
            <person name="Fulton R.S."/>
            <person name="Fulton L.A."/>
            <person name="Graves T.A."/>
            <person name="Pepin K.H."/>
            <person name="Wagner-McPherson C."/>
            <person name="Layman D."/>
            <person name="Maas J."/>
            <person name="Jaeger S."/>
            <person name="Walker R."/>
            <person name="Wylie K."/>
            <person name="Sekhon M."/>
            <person name="Becker M.C."/>
            <person name="O'Laughlin M.D."/>
            <person name="Schaller M.E."/>
            <person name="Fewell G.A."/>
            <person name="Delehaunty K.D."/>
            <person name="Miner T.L."/>
            <person name="Nash W.E."/>
            <person name="Cordes M."/>
            <person name="Du H."/>
            <person name="Sun H."/>
            <person name="Edwards J."/>
            <person name="Bradshaw-Cordum H."/>
            <person name="Ali J."/>
            <person name="Andrews S."/>
            <person name="Isak A."/>
            <person name="Vanbrunt A."/>
            <person name="Nguyen C."/>
            <person name="Du F."/>
            <person name="Lamar B."/>
            <person name="Courtney L."/>
            <person name="Kalicki J."/>
            <person name="Ozersky P."/>
            <person name="Bielicki L."/>
            <person name="Scott K."/>
            <person name="Holmes A."/>
            <person name="Harkins R."/>
            <person name="Harris A."/>
            <person name="Strong C.M."/>
            <person name="Hou S."/>
            <person name="Tomlinson C."/>
            <person name="Dauphin-Kohlberg S."/>
            <person name="Kozlowicz-Reilly A."/>
            <person name="Leonard S."/>
            <person name="Rohlfing T."/>
            <person name="Rock S.M."/>
            <person name="Tin-Wollam A.-M."/>
            <person name="Abbott A."/>
            <person name="Minx P."/>
            <person name="Maupin R."/>
            <person name="Strowmatt C."/>
            <person name="Latreille P."/>
            <person name="Miller N."/>
            <person name="Johnson D."/>
            <person name="Murray J."/>
            <person name="Woessner J.P."/>
            <person name="Wendl M.C."/>
            <person name="Yang S.-P."/>
            <person name="Schultz B.R."/>
            <person name="Wallis J.W."/>
            <person name="Spieth J."/>
            <person name="Bieri T.A."/>
            <person name="Nelson J.O."/>
            <person name="Berkowicz N."/>
            <person name="Wohldmann P.E."/>
            <person name="Cook L.L."/>
            <person name="Hickenbotham M.T."/>
            <person name="Eldred J."/>
            <person name="Williams D."/>
            <person name="Bedell J.A."/>
            <person name="Mardis E.R."/>
            <person name="Clifton S.W."/>
            <person name="Chissoe S.L."/>
            <person name="Marra M.A."/>
            <person name="Raymond C."/>
            <person name="Haugen E."/>
            <person name="Gillett W."/>
            <person name="Zhou Y."/>
            <person name="James R."/>
            <person name="Phelps K."/>
            <person name="Iadanoto S."/>
            <person name="Bubb K."/>
            <person name="Simms E."/>
            <person name="Levy R."/>
            <person name="Clendenning J."/>
            <person name="Kaul R."/>
            <person name="Kent W.J."/>
            <person name="Furey T.S."/>
            <person name="Baertsch R.A."/>
            <person name="Brent M.R."/>
            <person name="Keibler E."/>
            <person name="Flicek P."/>
            <person name="Bork P."/>
            <person name="Suyama M."/>
            <person name="Bailey J.A."/>
            <person name="Portnoy M.E."/>
            <person name="Torrents D."/>
            <person name="Chinwalla A.T."/>
            <person name="Gish W.R."/>
            <person name="Eddy S.R."/>
            <person name="McPherson J.D."/>
            <person name="Olson M.V."/>
            <person name="Eichler E.E."/>
            <person name="Green E.D."/>
            <person name="Waterston R.H."/>
            <person name="Wilson R.K."/>
        </authorList>
    </citation>
    <scope>NUCLEOTIDE SEQUENCE [LARGE SCALE GENOMIC DNA] (IMGT ALLELE TRBV10-2*01)</scope>
</reference>
<reference key="2">
    <citation type="book" date="2001" name="The T Cell Receptor FactsBook.">
        <title>The T Cell Receptor FactsBook.</title>
        <editorList>
            <person name="Lefranc M.P."/>
            <person name="Lefranc G."/>
        </editorList>
        <authorList>
            <person name="Lefranc M.P."/>
            <person name="Lefranc G."/>
        </authorList>
    </citation>
    <scope>NOMENCLATURE</scope>
</reference>
<reference key="3">
    <citation type="journal article" date="2004" name="Nat. Rev. Immunol.">
        <title>The many important facets of T-cell repertoire diversity.</title>
        <authorList>
            <person name="Nikolich-Zugich J."/>
            <person name="Slifka M.K."/>
            <person name="Messaoudi I."/>
        </authorList>
    </citation>
    <scope>REVIEW ON T CELL REPERTOIRE DIVERSITY</scope>
</reference>
<reference key="4">
    <citation type="journal article" date="2010" name="Cold Spring Harb. Perspect. Biol.">
        <title>Structural biology of the T-cell receptor: insights into receptor assembly, ligand recognition, and initiation of signaling.</title>
        <authorList>
            <person name="Wucherpfennig K.W."/>
            <person name="Gagnon E."/>
            <person name="Call M.J."/>
            <person name="Huseby E.S."/>
            <person name="Call M.E."/>
        </authorList>
    </citation>
    <scope>REVIEW ON T CELL RECEPTOR-CD3 COMPLEX ASSEMBLY</scope>
    <scope>SUBCELLULAR LOCATION</scope>
</reference>
<reference key="5">
    <citation type="journal article" date="2013" name="Nat. Rev. Immunol.">
        <title>T cell receptor signalling networks: branched, diversified and bounded.</title>
        <authorList>
            <person name="Brownlie R.J."/>
            <person name="Zamoyska R."/>
        </authorList>
    </citation>
    <scope>REVIEW ON T CELL RECEPTOR SIGNALING</scope>
</reference>
<reference key="6">
    <citation type="journal article" date="2014" name="Front. Immunol.">
        <title>Immunoglobulin and T Cell Receptor Genes: IMGT((R)) and the Birth and Rise of Immunoinformatics.</title>
        <authorList>
            <person name="Lefranc M.P."/>
        </authorList>
    </citation>
    <scope>NOMENCLATURE</scope>
</reference>
<reference key="7">
    <citation type="journal article" date="2015" name="Annu. Rev. Immunol.">
        <title>T cell antigen receptor recognition of antigen-presenting molecules.</title>
        <authorList>
            <person name="Rossjohn J."/>
            <person name="Gras S."/>
            <person name="Miles J.J."/>
            <person name="Turner S.J."/>
            <person name="Godfrey D.I."/>
            <person name="McCluskey J."/>
        </authorList>
    </citation>
    <scope>REVIEW ON FUNCTION</scope>
</reference>
<feature type="signal peptide" evidence="1">
    <location>
        <begin position="1"/>
        <end position="21"/>
    </location>
</feature>
<feature type="chain" id="PRO_5014028877" description="T cell receptor beta variable 10-2" evidence="1">
    <location>
        <begin position="22"/>
        <end position="114"/>
    </location>
</feature>
<feature type="domain" description="Ig-like" evidence="2">
    <location>
        <begin position="22"/>
        <end position="114" status="greater than"/>
    </location>
</feature>
<feature type="disulfide bond" evidence="2">
    <location>
        <begin position="42"/>
        <end position="110"/>
    </location>
</feature>
<feature type="non-terminal residue">
    <location>
        <position position="114"/>
    </location>
</feature>
<evidence type="ECO:0000255" key="1"/>
<evidence type="ECO:0000255" key="2">
    <source>
        <dbReference type="PROSITE-ProRule" id="PRU00114"/>
    </source>
</evidence>
<evidence type="ECO:0000303" key="3">
    <source>
    </source>
</evidence>
<evidence type="ECO:0000303" key="4">
    <source>
    </source>
</evidence>
<evidence type="ECO:0000303" key="5">
    <source>
    </source>
</evidence>
<evidence type="ECO:0000303" key="6">
    <source>
    </source>
</evidence>
<evidence type="ECO:0000303" key="7">
    <source>
    </source>
</evidence>
<evidence type="ECO:0000303" key="8">
    <source ref="2"/>
</evidence>
<evidence type="ECO:0000305" key="9"/>
<name>TVBJ2_HUMAN</name>
<comment type="function">
    <text evidence="3 5 6 7">V region of the variable domain of T cell receptor (TR) beta chain that participates in the antigen recognition (PubMed:24600447). Alpha-beta T cell receptors are antigen specific receptors which are essential to the immune response and are present on the cell surface of T lymphocytes. Recognize peptide-major histocompatibility (MH) (pMH) complexes that are displayed by antigen presenting cells (APC), a prerequisite for efficient T cell adaptive immunity against pathogens (PubMed:25493333). Binding of alpha-beta TR to pMH complex initiates TR-CD3 clustering on the cell surface and intracellular activation of LCK that phosphorylates the ITAM motifs of CD3G, CD3D, CD3E and CD247 enabling the recruitment of ZAP70. In turn ZAP70 phosphorylates LAT, which recruits numerous signaling molecules to form the LAT signalosome. The LAT signalosome propagates signal branching to three major signaling pathways, the calcium, the mitogen-activated protein kinase (MAPK) kinase and the nuclear factor NF-kappa-B (NF-kB) pathways, leading to the mobilization of transcription factors that are critical for gene expression and essential for T cell growth and differentiation (PubMed:23524462). The T cell repertoire is generated in the thymus, by V-(D)-J rearrangement. This repertoire is then shaped by intrathymic selection events to generate a peripheral T cell pool of self-MH restricted, non-autoaggressive T cells. Post-thymic interaction of alpha-beta TR with the pMH complexes shapes TR structural and functional avidity (PubMed:15040585).</text>
</comment>
<comment type="subunit">
    <text evidence="4">Alpha-beta TR is a heterodimer composed of an alpha and beta chain; disulfide-linked. The alpha-beta TR is associated with the transmembrane signaling CD3 coreceptor proteins to form the TR-CD3 (TcR or TCR). The assembly of alpha-beta TR heterodimers with CD3 occurs in the endoplasmic reticulum where a single alpha-beta TR heterodimer associates with one CD3D-CD3E heterodimer, one CD3G-CD3E heterodimer and one CD247 homodimer forming a stable octameric structure. CD3D-CD3E and CD3G-CD3E heterodimers preferentially associate with TR alpha and TR beta chains, respectively. The association of the CD247 homodimer is the last step of TcR assembly in the endoplasmic reticulum and is required for transport to the cell surface.</text>
</comment>
<comment type="subcellular location">
    <subcellularLocation>
        <location evidence="4">Cell membrane</location>
    </subcellularLocation>
</comment>
<comment type="polymorphism">
    <text evidence="9">There are several alleles. The sequence shown is that of IMGT allele TRBV10-2*01.</text>
</comment>
<gene>
    <name evidence="8" type="primary">TRBV10-2</name>
</gene>
<proteinExistence type="inferred from homology"/>
<dbReference type="EMBL" id="AC244196">
    <property type="status" value="NOT_ANNOTATED_CDS"/>
    <property type="molecule type" value="Genomic_DNA"/>
</dbReference>
<dbReference type="SMR" id="A0A0K0K1G8"/>
<dbReference type="FunCoup" id="A0A0K0K1G8">
    <property type="interactions" value="417"/>
</dbReference>
<dbReference type="IntAct" id="A0A0K0K1G8">
    <property type="interactions" value="1"/>
</dbReference>
<dbReference type="MINT" id="A0A0K0K1G8"/>
<dbReference type="IMGT_GENE-DB" id="TRBV10-2"/>
<dbReference type="BioMuta" id="TRBV10-2"/>
<dbReference type="Ensembl" id="ENST00000426318.2">
    <property type="protein sequence ID" value="ENSP00000404652.2"/>
    <property type="gene ID" value="ENSG00000229769.2"/>
</dbReference>
<dbReference type="Ensembl" id="ENST00000633575.1">
    <property type="protein sequence ID" value="ENSP00000488043.1"/>
    <property type="gene ID" value="ENSG00000282007.1"/>
</dbReference>
<dbReference type="UCSC" id="uc064isj.1">
    <property type="organism name" value="human"/>
</dbReference>
<dbReference type="AGR" id="HGNC:12178"/>
<dbReference type="GeneCards" id="TRBV10-2"/>
<dbReference type="HGNC" id="HGNC:12178">
    <property type="gene designation" value="TRBV10-2"/>
</dbReference>
<dbReference type="HPA" id="ENSG00000229769">
    <property type="expression patterns" value="Tissue enhanced (lymphoid)"/>
</dbReference>
<dbReference type="neXtProt" id="NX_A0A0K0K1G8"/>
<dbReference type="VEuPathDB" id="HostDB:ENSG00000229769"/>
<dbReference type="GeneTree" id="ENSGT00940000154542"/>
<dbReference type="InParanoid" id="A0A0K0K1G8"/>
<dbReference type="OMA" id="SSCWAVH"/>
<dbReference type="OrthoDB" id="9803478at2759"/>
<dbReference type="PAN-GO" id="A0A0K0K1G8">
    <property type="GO annotations" value="2 GO annotations based on evolutionary models"/>
</dbReference>
<dbReference type="ChiTaRS" id="TRBV10-2">
    <property type="organism name" value="human"/>
</dbReference>
<dbReference type="Pharos" id="A0A0K0K1G8">
    <property type="development level" value="Tdark"/>
</dbReference>
<dbReference type="PRO" id="PR:A0A0K0K1G8"/>
<dbReference type="Proteomes" id="UP000005640">
    <property type="component" value="Chromosome 7"/>
</dbReference>
<dbReference type="RNAct" id="A0A0K0K1G8">
    <property type="molecule type" value="protein"/>
</dbReference>
<dbReference type="Bgee" id="ENSG00000229769">
    <property type="expression patterns" value="Expressed in lymph node and 64 other cell types or tissues"/>
</dbReference>
<dbReference type="GO" id="GO:0005886">
    <property type="term" value="C:plasma membrane"/>
    <property type="evidence" value="ECO:0000318"/>
    <property type="project" value="GO_Central"/>
</dbReference>
<dbReference type="GO" id="GO:0042101">
    <property type="term" value="C:T cell receptor complex"/>
    <property type="evidence" value="ECO:0007669"/>
    <property type="project" value="UniProtKB-KW"/>
</dbReference>
<dbReference type="GO" id="GO:0002250">
    <property type="term" value="P:adaptive immune response"/>
    <property type="evidence" value="ECO:0007669"/>
    <property type="project" value="UniProtKB-KW"/>
</dbReference>
<dbReference type="GO" id="GO:0007166">
    <property type="term" value="P:cell surface receptor signaling pathway"/>
    <property type="evidence" value="ECO:0000318"/>
    <property type="project" value="GO_Central"/>
</dbReference>
<dbReference type="Gene3D" id="2.60.40.10">
    <property type="entry name" value="Immunoglobulins"/>
    <property type="match status" value="1"/>
</dbReference>
<dbReference type="InterPro" id="IPR007110">
    <property type="entry name" value="Ig-like_dom"/>
</dbReference>
<dbReference type="InterPro" id="IPR036179">
    <property type="entry name" value="Ig-like_dom_sf"/>
</dbReference>
<dbReference type="InterPro" id="IPR013783">
    <property type="entry name" value="Ig-like_fold"/>
</dbReference>
<dbReference type="InterPro" id="IPR013106">
    <property type="entry name" value="Ig_V-set"/>
</dbReference>
<dbReference type="InterPro" id="IPR050413">
    <property type="entry name" value="TCR_beta_variable"/>
</dbReference>
<dbReference type="PANTHER" id="PTHR23268:SF42">
    <property type="entry name" value="T CELL RECEPTOR BETA VARIABLE 10-1-RELATED"/>
    <property type="match status" value="1"/>
</dbReference>
<dbReference type="PANTHER" id="PTHR23268">
    <property type="entry name" value="T-CELL RECEPTOR BETA CHAIN"/>
    <property type="match status" value="1"/>
</dbReference>
<dbReference type="Pfam" id="PF07686">
    <property type="entry name" value="V-set"/>
    <property type="match status" value="1"/>
</dbReference>
<dbReference type="SMART" id="SM00406">
    <property type="entry name" value="IGv"/>
    <property type="match status" value="1"/>
</dbReference>
<dbReference type="SUPFAM" id="SSF48726">
    <property type="entry name" value="Immunoglobulin"/>
    <property type="match status" value="1"/>
</dbReference>
<dbReference type="PROSITE" id="PS50835">
    <property type="entry name" value="IG_LIKE"/>
    <property type="match status" value="1"/>
</dbReference>